<feature type="chain" id="PRO_0000091906" description="Meiosis-specific transcription factor mei4">
    <location>
        <begin position="1"/>
        <end position="517"/>
    </location>
</feature>
<feature type="DNA-binding region" description="Fork-head" evidence="1">
    <location>
        <begin position="81"/>
        <end position="172"/>
    </location>
</feature>
<feature type="region of interest" description="Disordered" evidence="2">
    <location>
        <begin position="170"/>
        <end position="278"/>
    </location>
</feature>
<feature type="compositionally biased region" description="Low complexity" evidence="2">
    <location>
        <begin position="209"/>
        <end position="223"/>
    </location>
</feature>
<feature type="compositionally biased region" description="Polar residues" evidence="2">
    <location>
        <begin position="230"/>
        <end position="246"/>
    </location>
</feature>
<feature type="compositionally biased region" description="Low complexity" evidence="2">
    <location>
        <begin position="254"/>
        <end position="270"/>
    </location>
</feature>
<dbReference type="EMBL" id="AB012695">
    <property type="protein sequence ID" value="BAA25402.1"/>
    <property type="molecule type" value="Genomic_DNA"/>
</dbReference>
<dbReference type="EMBL" id="AB004534">
    <property type="protein sequence ID" value="BAA21390.1"/>
    <property type="molecule type" value="Genomic_DNA"/>
</dbReference>
<dbReference type="EMBL" id="CU329671">
    <property type="protein sequence ID" value="CAC37501.1"/>
    <property type="molecule type" value="Genomic_DNA"/>
</dbReference>
<dbReference type="PIR" id="T43358">
    <property type="entry name" value="T43358"/>
</dbReference>
<dbReference type="RefSeq" id="NP_595617.1">
    <property type="nucleotide sequence ID" value="NM_001021512.2"/>
</dbReference>
<dbReference type="SMR" id="O13606"/>
<dbReference type="BioGRID" id="276773">
    <property type="interactions" value="38"/>
</dbReference>
<dbReference type="DIP" id="DIP-59802N"/>
<dbReference type="FunCoup" id="O13606">
    <property type="interactions" value="3"/>
</dbReference>
<dbReference type="IntAct" id="O13606">
    <property type="interactions" value="3"/>
</dbReference>
<dbReference type="STRING" id="284812.O13606"/>
<dbReference type="iPTMnet" id="O13606"/>
<dbReference type="PaxDb" id="4896-SPBC32H8.11.1"/>
<dbReference type="EnsemblFungi" id="SPBC32H8.11.1">
    <property type="protein sequence ID" value="SPBC32H8.11.1:pep"/>
    <property type="gene ID" value="SPBC32H8.11"/>
</dbReference>
<dbReference type="GeneID" id="2540241"/>
<dbReference type="KEGG" id="spo:2540241"/>
<dbReference type="PomBase" id="SPBC32H8.11">
    <property type="gene designation" value="mei4"/>
</dbReference>
<dbReference type="VEuPathDB" id="FungiDB:SPBC32H8.11"/>
<dbReference type="eggNOG" id="KOG2294">
    <property type="taxonomic scope" value="Eukaryota"/>
</dbReference>
<dbReference type="HOGENOM" id="CLU_526931_0_0_1"/>
<dbReference type="InParanoid" id="O13606"/>
<dbReference type="OMA" id="TWIRNTF"/>
<dbReference type="Reactome" id="R-SPO-3232118">
    <property type="pathway name" value="SUMOylation of transcription factors"/>
</dbReference>
<dbReference type="Reactome" id="R-SPO-9018519">
    <property type="pathway name" value="Estrogen-dependent gene expression"/>
</dbReference>
<dbReference type="PRO" id="PR:O13606"/>
<dbReference type="Proteomes" id="UP000002485">
    <property type="component" value="Chromosome II"/>
</dbReference>
<dbReference type="GO" id="GO:0000785">
    <property type="term" value="C:chromatin"/>
    <property type="evidence" value="ECO:0000314"/>
    <property type="project" value="PomBase"/>
</dbReference>
<dbReference type="GO" id="GO:0005634">
    <property type="term" value="C:nucleus"/>
    <property type="evidence" value="ECO:0000314"/>
    <property type="project" value="PomBase"/>
</dbReference>
<dbReference type="GO" id="GO:0001228">
    <property type="term" value="F:DNA-binding transcription activator activity, RNA polymerase II-specific"/>
    <property type="evidence" value="ECO:0000314"/>
    <property type="project" value="PomBase"/>
</dbReference>
<dbReference type="GO" id="GO:0003700">
    <property type="term" value="F:DNA-binding transcription factor activity"/>
    <property type="evidence" value="ECO:0000315"/>
    <property type="project" value="PomBase"/>
</dbReference>
<dbReference type="GO" id="GO:0000981">
    <property type="term" value="F:DNA-binding transcription factor activity, RNA polymerase II-specific"/>
    <property type="evidence" value="ECO:0000318"/>
    <property type="project" value="GO_Central"/>
</dbReference>
<dbReference type="GO" id="GO:0000978">
    <property type="term" value="F:RNA polymerase II cis-regulatory region sequence-specific DNA binding"/>
    <property type="evidence" value="ECO:0000314"/>
    <property type="project" value="PomBase"/>
</dbReference>
<dbReference type="GO" id="GO:0051728">
    <property type="term" value="P:cell cycle switching, mitotic to meiotic cell cycle"/>
    <property type="evidence" value="ECO:0000315"/>
    <property type="project" value="PomBase"/>
</dbReference>
<dbReference type="GO" id="GO:0051321">
    <property type="term" value="P:meiotic cell cycle"/>
    <property type="evidence" value="ECO:0007669"/>
    <property type="project" value="UniProtKB-KW"/>
</dbReference>
<dbReference type="GO" id="GO:0045944">
    <property type="term" value="P:positive regulation of transcription by RNA polymerase II"/>
    <property type="evidence" value="ECO:0000315"/>
    <property type="project" value="PomBase"/>
</dbReference>
<dbReference type="GO" id="GO:0110044">
    <property type="term" value="P:regulation of cell cycle switching, mitotic to meiotic cell cycle"/>
    <property type="evidence" value="ECO:0000315"/>
    <property type="project" value="PomBase"/>
</dbReference>
<dbReference type="GO" id="GO:0006357">
    <property type="term" value="P:regulation of transcription by RNA polymerase II"/>
    <property type="evidence" value="ECO:0000315"/>
    <property type="project" value="PomBase"/>
</dbReference>
<dbReference type="CDD" id="cd00059">
    <property type="entry name" value="FH_FOX"/>
    <property type="match status" value="1"/>
</dbReference>
<dbReference type="FunFam" id="1.10.10.10:FF:000260">
    <property type="entry name" value="Forkhead transcription factor (Sep1)"/>
    <property type="match status" value="1"/>
</dbReference>
<dbReference type="Gene3D" id="1.10.10.10">
    <property type="entry name" value="Winged helix-like DNA-binding domain superfamily/Winged helix DNA-binding domain"/>
    <property type="match status" value="1"/>
</dbReference>
<dbReference type="InterPro" id="IPR001766">
    <property type="entry name" value="Fork_head_dom"/>
</dbReference>
<dbReference type="InterPro" id="IPR030456">
    <property type="entry name" value="TF_fork_head_CS_2"/>
</dbReference>
<dbReference type="InterPro" id="IPR036388">
    <property type="entry name" value="WH-like_DNA-bd_sf"/>
</dbReference>
<dbReference type="InterPro" id="IPR036390">
    <property type="entry name" value="WH_DNA-bd_sf"/>
</dbReference>
<dbReference type="PANTHER" id="PTHR45881">
    <property type="entry name" value="CHECKPOINT SUPPRESSOR 1-LIKE, ISOFORM A-RELATED"/>
    <property type="match status" value="1"/>
</dbReference>
<dbReference type="PANTHER" id="PTHR45881:SF1">
    <property type="entry name" value="FORK HEAD PROTEIN HOMOLOG 2"/>
    <property type="match status" value="1"/>
</dbReference>
<dbReference type="Pfam" id="PF00250">
    <property type="entry name" value="Forkhead"/>
    <property type="match status" value="1"/>
</dbReference>
<dbReference type="PRINTS" id="PR00053">
    <property type="entry name" value="FORKHEAD"/>
</dbReference>
<dbReference type="SMART" id="SM00339">
    <property type="entry name" value="FH"/>
    <property type="match status" value="1"/>
</dbReference>
<dbReference type="SUPFAM" id="SSF46785">
    <property type="entry name" value="Winged helix' DNA-binding domain"/>
    <property type="match status" value="1"/>
</dbReference>
<dbReference type="PROSITE" id="PS00658">
    <property type="entry name" value="FORK_HEAD_2"/>
    <property type="match status" value="1"/>
</dbReference>
<dbReference type="PROSITE" id="PS50039">
    <property type="entry name" value="FORK_HEAD_3"/>
    <property type="match status" value="1"/>
</dbReference>
<gene>
    <name type="primary">mei4</name>
    <name type="ORF">pi013</name>
    <name type="ORF">SPBC32H8.11</name>
</gene>
<proteinExistence type="predicted"/>
<evidence type="ECO:0000255" key="1">
    <source>
        <dbReference type="PROSITE-ProRule" id="PRU00089"/>
    </source>
</evidence>
<evidence type="ECO:0000256" key="2">
    <source>
        <dbReference type="SAM" id="MobiDB-lite"/>
    </source>
</evidence>
<evidence type="ECO:0000305" key="3"/>
<keyword id="KW-0010">Activator</keyword>
<keyword id="KW-0238">DNA-binding</keyword>
<keyword id="KW-0469">Meiosis</keyword>
<keyword id="KW-0539">Nucleus</keyword>
<keyword id="KW-1185">Reference proteome</keyword>
<keyword id="KW-0804">Transcription</keyword>
<keyword id="KW-0805">Transcription regulation</keyword>
<reference key="1">
    <citation type="journal article" date="1998" name="Mol. Cell. Biol.">
        <title>The Schizosaccharomyces pombe mei4+ gene encodes a meiosis-specific transcription factor containing a forkhead DNA-binding domain.</title>
        <authorList>
            <person name="Horie S."/>
            <person name="Watanabe Y."/>
            <person name="Tanaka K."/>
            <person name="Nishiwaki S."/>
            <person name="Fujioka H."/>
            <person name="Abe H."/>
            <person name="Yamamoto M."/>
            <person name="Shimoda C."/>
        </authorList>
    </citation>
    <scope>NUCLEOTIDE SEQUENCE [GENOMIC DNA]</scope>
    <source>
        <strain>972 / ATCC 24843</strain>
    </source>
</reference>
<reference key="2">
    <citation type="journal article" date="2000" name="Yeast">
        <title>A 38 kb segment containing the cdc2 gene from the left arm of fission yeast chromosome II: sequence analysis and characterization of the genomic DNA and cDNAs encoded on the segment.</title>
        <authorList>
            <person name="Machida M."/>
            <person name="Yamazaki S."/>
            <person name="Kunihiro S."/>
            <person name="Tanaka T."/>
            <person name="Kushida N."/>
            <person name="Jinno K."/>
            <person name="Haikawa Y."/>
            <person name="Yamazaki J."/>
            <person name="Yamamoto S."/>
            <person name="Sekine M."/>
            <person name="Oguchi A."/>
            <person name="Nagai Y."/>
            <person name="Sakai M."/>
            <person name="Aoki K."/>
            <person name="Ogura K."/>
            <person name="Kudoh Y."/>
            <person name="Kikuchi H."/>
            <person name="Zhang M.Q."/>
            <person name="Yanagida M."/>
        </authorList>
    </citation>
    <scope>NUCLEOTIDE SEQUENCE [LARGE SCALE GENOMIC DNA]</scope>
    <source>
        <strain>972 / ATCC 24843</strain>
    </source>
</reference>
<reference key="3">
    <citation type="journal article" date="2002" name="Nature">
        <title>The genome sequence of Schizosaccharomyces pombe.</title>
        <authorList>
            <person name="Wood V."/>
            <person name="Gwilliam R."/>
            <person name="Rajandream M.A."/>
            <person name="Lyne M.H."/>
            <person name="Lyne R."/>
            <person name="Stewart A."/>
            <person name="Sgouros J.G."/>
            <person name="Peat N."/>
            <person name="Hayles J."/>
            <person name="Baker S.G."/>
            <person name="Basham D."/>
            <person name="Bowman S."/>
            <person name="Brooks K."/>
            <person name="Brown D."/>
            <person name="Brown S."/>
            <person name="Chillingworth T."/>
            <person name="Churcher C.M."/>
            <person name="Collins M."/>
            <person name="Connor R."/>
            <person name="Cronin A."/>
            <person name="Davis P."/>
            <person name="Feltwell T."/>
            <person name="Fraser A."/>
            <person name="Gentles S."/>
            <person name="Goble A."/>
            <person name="Hamlin N."/>
            <person name="Harris D.E."/>
            <person name="Hidalgo J."/>
            <person name="Hodgson G."/>
            <person name="Holroyd S."/>
            <person name="Hornsby T."/>
            <person name="Howarth S."/>
            <person name="Huckle E.J."/>
            <person name="Hunt S."/>
            <person name="Jagels K."/>
            <person name="James K.D."/>
            <person name="Jones L."/>
            <person name="Jones M."/>
            <person name="Leather S."/>
            <person name="McDonald S."/>
            <person name="McLean J."/>
            <person name="Mooney P."/>
            <person name="Moule S."/>
            <person name="Mungall K.L."/>
            <person name="Murphy L.D."/>
            <person name="Niblett D."/>
            <person name="Odell C."/>
            <person name="Oliver K."/>
            <person name="O'Neil S."/>
            <person name="Pearson D."/>
            <person name="Quail M.A."/>
            <person name="Rabbinowitsch E."/>
            <person name="Rutherford K.M."/>
            <person name="Rutter S."/>
            <person name="Saunders D."/>
            <person name="Seeger K."/>
            <person name="Sharp S."/>
            <person name="Skelton J."/>
            <person name="Simmonds M.N."/>
            <person name="Squares R."/>
            <person name="Squares S."/>
            <person name="Stevens K."/>
            <person name="Taylor K."/>
            <person name="Taylor R.G."/>
            <person name="Tivey A."/>
            <person name="Walsh S.V."/>
            <person name="Warren T."/>
            <person name="Whitehead S."/>
            <person name="Woodward J.R."/>
            <person name="Volckaert G."/>
            <person name="Aert R."/>
            <person name="Robben J."/>
            <person name="Grymonprez B."/>
            <person name="Weltjens I."/>
            <person name="Vanstreels E."/>
            <person name="Rieger M."/>
            <person name="Schaefer M."/>
            <person name="Mueller-Auer S."/>
            <person name="Gabel C."/>
            <person name="Fuchs M."/>
            <person name="Duesterhoeft A."/>
            <person name="Fritzc C."/>
            <person name="Holzer E."/>
            <person name="Moestl D."/>
            <person name="Hilbert H."/>
            <person name="Borzym K."/>
            <person name="Langer I."/>
            <person name="Beck A."/>
            <person name="Lehrach H."/>
            <person name="Reinhardt R."/>
            <person name="Pohl T.M."/>
            <person name="Eger P."/>
            <person name="Zimmermann W."/>
            <person name="Wedler H."/>
            <person name="Wambutt R."/>
            <person name="Purnelle B."/>
            <person name="Goffeau A."/>
            <person name="Cadieu E."/>
            <person name="Dreano S."/>
            <person name="Gloux S."/>
            <person name="Lelaure V."/>
            <person name="Mottier S."/>
            <person name="Galibert F."/>
            <person name="Aves S.J."/>
            <person name="Xiang Z."/>
            <person name="Hunt C."/>
            <person name="Moore K."/>
            <person name="Hurst S.M."/>
            <person name="Lucas M."/>
            <person name="Rochet M."/>
            <person name="Gaillardin C."/>
            <person name="Tallada V.A."/>
            <person name="Garzon A."/>
            <person name="Thode G."/>
            <person name="Daga R.R."/>
            <person name="Cruzado L."/>
            <person name="Jimenez J."/>
            <person name="Sanchez M."/>
            <person name="del Rey F."/>
            <person name="Benito J."/>
            <person name="Dominguez A."/>
            <person name="Revuelta J.L."/>
            <person name="Moreno S."/>
            <person name="Armstrong J."/>
            <person name="Forsburg S.L."/>
            <person name="Cerutti L."/>
            <person name="Lowe T."/>
            <person name="McCombie W.R."/>
            <person name="Paulsen I."/>
            <person name="Potashkin J."/>
            <person name="Shpakovski G.V."/>
            <person name="Ussery D."/>
            <person name="Barrell B.G."/>
            <person name="Nurse P."/>
        </authorList>
    </citation>
    <scope>NUCLEOTIDE SEQUENCE [LARGE SCALE GENOMIC DNA]</scope>
    <source>
        <strain>972 / ATCC 24843</strain>
    </source>
</reference>
<organism>
    <name type="scientific">Schizosaccharomyces pombe (strain 972 / ATCC 24843)</name>
    <name type="common">Fission yeast</name>
    <dbReference type="NCBI Taxonomy" id="284812"/>
    <lineage>
        <taxon>Eukaryota</taxon>
        <taxon>Fungi</taxon>
        <taxon>Dikarya</taxon>
        <taxon>Ascomycota</taxon>
        <taxon>Taphrinomycotina</taxon>
        <taxon>Schizosaccharomycetes</taxon>
        <taxon>Schizosaccharomycetales</taxon>
        <taxon>Schizosaccharomycetaceae</taxon>
        <taxon>Schizosaccharomyces</taxon>
    </lineage>
</organism>
<name>MEI4_SCHPO</name>
<protein>
    <recommendedName>
        <fullName>Meiosis-specific transcription factor mei4</fullName>
    </recommendedName>
</protein>
<sequence length="517" mass="57685">MVENQGNVEAHGKPKKVILSLSLKESSKINDSQNVSNVSSKEKCETEALLREENKENLSSDSIRQMIFGDEMAGFVDTGEKPPCSYATLIGLAILQSHNKQLTLSGIYTWIRNTFRYYLNHDGGWQNSIRHNLSLNKAFIKVEKPKGKTLKGHYWTIDPDHMQNFVSVRLHRSHSTDSNSKKRPSSKCHEIKPLTTREIPLARKRSRLNSFNSSTSTSGSSSNVAAEVSNDASQPSNQDSSLNSNIVKPPLPPSNVQSNSSSSENVPKPNAETQEDLPTIDAHESSLYENVNDSRLYEVPACRNMALNTGYSDADPGYLRTSFRSNSHNSLPYSANEEEDVLQADFLVSQQSSMVSSYVSSRDPHSMPYYRREPIPLRPSSRFYEYTRPTYGRTDTSCSAPGAFCSTQINSPSSYINYSKCAPSSPTLSLQKHREHVKSLLYVPDLTPSFDGSDPWNPSSQLLSEPLFDQHSFQSSLDDLMSVTCFRDSPELNHESSGYSSAPLMPSNRAFINDFSL</sequence>
<comment type="function">
    <text>Functions as a meiosis-specific transcription factor. Binds to the 5'-GTAAAYA-3' consensus sequence of the promoter of the spo6 gene.</text>
</comment>
<comment type="subcellular location">
    <subcellularLocation>
        <location evidence="3">Nucleus</location>
    </subcellularLocation>
</comment>
<accession>O13606</accession>